<protein>
    <recommendedName>
        <fullName>Yop proteins translocation protein X</fullName>
    </recommendedName>
</protein>
<evidence type="ECO:0000250" key="1"/>
<evidence type="ECO:0000255" key="2"/>
<evidence type="ECO:0000269" key="3">
    <source>
    </source>
</evidence>
<evidence type="ECO:0000269" key="4">
    <source>
    </source>
</evidence>
<evidence type="ECO:0007829" key="5">
    <source>
        <dbReference type="PDB" id="7QIH"/>
    </source>
</evidence>
<comment type="function">
    <text evidence="4">Required for Yop secretion.</text>
</comment>
<comment type="subunit">
    <text evidence="1">Interacts with YscY.</text>
</comment>
<comment type="subcellular location">
    <subcellularLocation>
        <location>Secreted</location>
    </subcellularLocation>
    <text evidence="1">Secreted via the type III secretion system.</text>
</comment>
<comment type="induction">
    <text evidence="3">Temperature seems to play the major role in regulation of transcription of the lcrE-containing operon of pYV, whereas Ca(2+) concentration has only a moderate effect at 37 degrees Celsius, and no effect at room temperature.</text>
</comment>
<comment type="domain">
    <text evidence="1">The region between residues 50 and 110, which contains the predicted coiled coil domain, is essential for interaction with YscY.</text>
</comment>
<comment type="miscellaneous">
    <text evidence="1">May possess both an mRNA signal and a syc-dependent signal capable of directing its export through the type III secretion system.</text>
</comment>
<sequence>MSRIITAPHIGIEKLSAISLEELSCGLPDRYALPPDGHPVEPHLERLYPTAQSKRSLWDFASPGYTFHGLHRAQDYRRELDTLQSLLTTSQSSELQAAAALLKCQQDDDRLLQIILNLLHKV</sequence>
<dbReference type="EMBL" id="M32097">
    <property type="status" value="NOT_ANNOTATED_CDS"/>
    <property type="molecule type" value="Genomic_DNA"/>
</dbReference>
<dbReference type="EMBL" id="AF102990">
    <property type="protein sequence ID" value="AAD16820.1"/>
    <property type="molecule type" value="Genomic_DNA"/>
</dbReference>
<dbReference type="EMBL" id="AY150843">
    <property type="protein sequence ID" value="AAN37521.1"/>
    <property type="molecule type" value="Genomic_DNA"/>
</dbReference>
<dbReference type="PIR" id="D35392">
    <property type="entry name" value="D35392"/>
</dbReference>
<dbReference type="RefSeq" id="NP_052397.1">
    <property type="nucleotide sequence ID" value="NC_002120.1"/>
</dbReference>
<dbReference type="RefSeq" id="NP_783670.1">
    <property type="nucleotide sequence ID" value="NC_004564.1"/>
</dbReference>
<dbReference type="RefSeq" id="NP_863519.1">
    <property type="nucleotide sequence ID" value="NC_005017.1"/>
</dbReference>
<dbReference type="RefSeq" id="WP_010891214.1">
    <property type="nucleotide sequence ID" value="NZ_KN150737.1"/>
</dbReference>
<dbReference type="PDB" id="7QIH">
    <property type="method" value="X-ray"/>
    <property type="resolution" value="1.92 A"/>
    <property type="chains" value="B/D=50-122"/>
</dbReference>
<dbReference type="PDB" id="7QII">
    <property type="method" value="X-ray"/>
    <property type="resolution" value="3.29 A"/>
    <property type="chains" value="B=32-122"/>
</dbReference>
<dbReference type="PDB" id="7QIJ">
    <property type="method" value="X-ray"/>
    <property type="resolution" value="4.10 A"/>
    <property type="chains" value="AB/BB/CB/DB/EB/FB/GB/HB/IB/JB/KB/LB/MB/NB/OB/PB/QB/RB=32-122"/>
</dbReference>
<dbReference type="PDBsum" id="7QIH"/>
<dbReference type="PDBsum" id="7QII"/>
<dbReference type="PDBsum" id="7QIJ"/>
<dbReference type="SMR" id="P0C2N4"/>
<dbReference type="GeneID" id="31412302"/>
<dbReference type="KEGG" id="yet:CH48_4216"/>
<dbReference type="PATRIC" id="fig|630.129.peg.4358"/>
<dbReference type="OMA" id="KYRQQFD"/>
<dbReference type="GO" id="GO:0005576">
    <property type="term" value="C:extracellular region"/>
    <property type="evidence" value="ECO:0007669"/>
    <property type="project" value="UniProtKB-SubCell"/>
</dbReference>
<dbReference type="InterPro" id="IPR012672">
    <property type="entry name" value="T3SS_YscX"/>
</dbReference>
<dbReference type="NCBIfam" id="TIGR02502">
    <property type="entry name" value="type_III_YscX"/>
    <property type="match status" value="1"/>
</dbReference>
<dbReference type="Pfam" id="PF09474">
    <property type="entry name" value="Type_III_YscX"/>
    <property type="match status" value="1"/>
</dbReference>
<proteinExistence type="evidence at protein level"/>
<reference key="1">
    <citation type="journal article" date="1990" name="J. Bacteriol.">
        <title>The lcrE gene is part of an operon in the lcr region of Yersinia enterocolitica O:3.</title>
        <authorList>
            <person name="Viitanen A.-M."/>
            <person name="Toivanen P."/>
            <person name="Skurnik M."/>
        </authorList>
    </citation>
    <scope>NUCLEOTIDE SEQUENCE [GENOMIC DNA]</scope>
    <scope>INDUCTION</scope>
    <source>
        <strain>Serotype O:3</strain>
        <plasmid>pYV</plasmid>
    </source>
</reference>
<reference key="2">
    <citation type="submission" date="1998-10" db="EMBL/GenBank/DDBJ databases">
        <title>Detailed genetic map of the pYVe227 plasmid of Yersinia enterocolitica serotype O:9.</title>
        <authorList>
            <person name="Iriarte M."/>
            <person name="Lambermont I."/>
            <person name="Kerbourch C."/>
            <person name="Cornelis G.R."/>
        </authorList>
    </citation>
    <scope>NUCLEOTIDE SEQUENCE [GENOMIC DNA]</scope>
    <source>
        <strain>W22703 / Serotype O:9 / Biotype 2</strain>
        <plasmid>pYVe227</plasmid>
    </source>
</reference>
<reference key="3">
    <citation type="journal article" date="2003" name="Res. Microbiol.">
        <title>DNA sequence and analysis of the pYVa127/90 virulence plasmid of Yersinia enterocolitica strain A127/90.</title>
        <authorList>
            <person name="Foultier B."/>
            <person name="Cornelis G.R."/>
        </authorList>
    </citation>
    <scope>NUCLEOTIDE SEQUENCE [GENOMIC DNA]</scope>
    <source>
        <strain>A127/90 / Serotype O:8 / Biotype 1B</strain>
        <plasmid>pYVa127/90</plasmid>
    </source>
</reference>
<reference key="4">
    <citation type="journal article" date="1999" name="J. Bacteriol.">
        <title>Identification of SycN, YscX, and YscY, three new elements of the Yersinia Yop virulon.</title>
        <authorList>
            <person name="Iriarte M."/>
            <person name="Cornelis G.R."/>
        </authorList>
    </citation>
    <scope>FUNCTION</scope>
    <source>
        <plasmid>pYV</plasmid>
    </source>
</reference>
<organism>
    <name type="scientific">Yersinia enterocolitica</name>
    <dbReference type="NCBI Taxonomy" id="630"/>
    <lineage>
        <taxon>Bacteria</taxon>
        <taxon>Pseudomonadati</taxon>
        <taxon>Pseudomonadota</taxon>
        <taxon>Gammaproteobacteria</taxon>
        <taxon>Enterobacterales</taxon>
        <taxon>Yersiniaceae</taxon>
        <taxon>Yersinia</taxon>
    </lineage>
</organism>
<feature type="chain" id="PRO_0000066499" description="Yop proteins translocation protein X">
    <location>
        <begin position="1"/>
        <end position="122"/>
    </location>
</feature>
<feature type="coiled-coil region" evidence="2">
    <location>
        <begin position="71"/>
        <end position="87"/>
    </location>
</feature>
<feature type="sequence variant" description="In plasmid pYVa127/90.">
    <original>D</original>
    <variation>E</variation>
    <location>
        <position position="29"/>
    </location>
</feature>
<feature type="helix" evidence="5">
    <location>
        <begin position="51"/>
        <end position="61"/>
    </location>
</feature>
<feature type="helix" evidence="5">
    <location>
        <begin position="72"/>
        <end position="88"/>
    </location>
</feature>
<feature type="helix" evidence="5">
    <location>
        <begin position="93"/>
        <end position="118"/>
    </location>
</feature>
<geneLocation type="plasmid">
    <name>pYV</name>
</geneLocation>
<geneLocation type="plasmid">
    <name>pYVe227</name>
</geneLocation>
<geneLocation type="plasmid">
    <name>pYVa127/90</name>
</geneLocation>
<accession>P0C2N4</accession>
<accession>O68696</accession>
<accession>P21208</accession>
<keyword id="KW-0002">3D-structure</keyword>
<keyword id="KW-0175">Coiled coil</keyword>
<keyword id="KW-0614">Plasmid</keyword>
<keyword id="KW-0964">Secreted</keyword>
<name>YSCX_YEREN</name>
<gene>
    <name type="primary">yscX</name>
</gene>